<name>PURL_PARS2</name>
<organism>
    <name type="scientific">Parafrankia sp. (strain EAN1pec)</name>
    <dbReference type="NCBI Taxonomy" id="298653"/>
    <lineage>
        <taxon>Bacteria</taxon>
        <taxon>Bacillati</taxon>
        <taxon>Actinomycetota</taxon>
        <taxon>Actinomycetes</taxon>
        <taxon>Frankiales</taxon>
        <taxon>Frankiaceae</taxon>
        <taxon>Parafrankia</taxon>
    </lineage>
</organism>
<dbReference type="EC" id="6.3.5.3" evidence="1"/>
<dbReference type="EMBL" id="CP000820">
    <property type="protein sequence ID" value="ABW09622.1"/>
    <property type="molecule type" value="Genomic_DNA"/>
</dbReference>
<dbReference type="RefSeq" id="WP_012157599.1">
    <property type="nucleotide sequence ID" value="NC_009921.1"/>
</dbReference>
<dbReference type="SMR" id="A8LCI3"/>
<dbReference type="STRING" id="298653.Franean1_0155"/>
<dbReference type="KEGG" id="fre:Franean1_0155"/>
<dbReference type="eggNOG" id="COG0046">
    <property type="taxonomic scope" value="Bacteria"/>
</dbReference>
<dbReference type="HOGENOM" id="CLU_003100_0_1_11"/>
<dbReference type="UniPathway" id="UPA00074">
    <property type="reaction ID" value="UER00128"/>
</dbReference>
<dbReference type="GO" id="GO:0005737">
    <property type="term" value="C:cytoplasm"/>
    <property type="evidence" value="ECO:0007669"/>
    <property type="project" value="UniProtKB-SubCell"/>
</dbReference>
<dbReference type="GO" id="GO:0005524">
    <property type="term" value="F:ATP binding"/>
    <property type="evidence" value="ECO:0007669"/>
    <property type="project" value="UniProtKB-UniRule"/>
</dbReference>
<dbReference type="GO" id="GO:0000287">
    <property type="term" value="F:magnesium ion binding"/>
    <property type="evidence" value="ECO:0007669"/>
    <property type="project" value="UniProtKB-UniRule"/>
</dbReference>
<dbReference type="GO" id="GO:0004642">
    <property type="term" value="F:phosphoribosylformylglycinamidine synthase activity"/>
    <property type="evidence" value="ECO:0007669"/>
    <property type="project" value="UniProtKB-UniRule"/>
</dbReference>
<dbReference type="GO" id="GO:0006189">
    <property type="term" value="P:'de novo' IMP biosynthetic process"/>
    <property type="evidence" value="ECO:0007669"/>
    <property type="project" value="UniProtKB-UniRule"/>
</dbReference>
<dbReference type="CDD" id="cd02203">
    <property type="entry name" value="PurL_repeat1"/>
    <property type="match status" value="1"/>
</dbReference>
<dbReference type="CDD" id="cd02204">
    <property type="entry name" value="PurL_repeat2"/>
    <property type="match status" value="1"/>
</dbReference>
<dbReference type="FunFam" id="3.30.1330.10:FF:000004">
    <property type="entry name" value="Phosphoribosylformylglycinamidine synthase subunit PurL"/>
    <property type="match status" value="1"/>
</dbReference>
<dbReference type="Gene3D" id="3.90.650.10">
    <property type="entry name" value="PurM-like C-terminal domain"/>
    <property type="match status" value="2"/>
</dbReference>
<dbReference type="Gene3D" id="3.30.1330.10">
    <property type="entry name" value="PurM-like, N-terminal domain"/>
    <property type="match status" value="2"/>
</dbReference>
<dbReference type="HAMAP" id="MF_00420">
    <property type="entry name" value="PurL_2"/>
    <property type="match status" value="1"/>
</dbReference>
<dbReference type="InterPro" id="IPR010074">
    <property type="entry name" value="PRibForGlyAmidine_synth_PurL"/>
</dbReference>
<dbReference type="InterPro" id="IPR041609">
    <property type="entry name" value="PurL_linker"/>
</dbReference>
<dbReference type="InterPro" id="IPR010918">
    <property type="entry name" value="PurM-like_C_dom"/>
</dbReference>
<dbReference type="InterPro" id="IPR036676">
    <property type="entry name" value="PurM-like_C_sf"/>
</dbReference>
<dbReference type="InterPro" id="IPR016188">
    <property type="entry name" value="PurM-like_N"/>
</dbReference>
<dbReference type="InterPro" id="IPR036921">
    <property type="entry name" value="PurM-like_N_sf"/>
</dbReference>
<dbReference type="NCBIfam" id="TIGR01736">
    <property type="entry name" value="FGAM_synth_II"/>
    <property type="match status" value="1"/>
</dbReference>
<dbReference type="NCBIfam" id="NF002290">
    <property type="entry name" value="PRK01213.1"/>
    <property type="match status" value="1"/>
</dbReference>
<dbReference type="PANTHER" id="PTHR43555">
    <property type="entry name" value="PHOSPHORIBOSYLFORMYLGLYCINAMIDINE SYNTHASE SUBUNIT PURL"/>
    <property type="match status" value="1"/>
</dbReference>
<dbReference type="PANTHER" id="PTHR43555:SF1">
    <property type="entry name" value="PHOSPHORIBOSYLFORMYLGLYCINAMIDINE SYNTHASE SUBUNIT PURL"/>
    <property type="match status" value="1"/>
</dbReference>
<dbReference type="Pfam" id="PF00586">
    <property type="entry name" value="AIRS"/>
    <property type="match status" value="2"/>
</dbReference>
<dbReference type="Pfam" id="PF02769">
    <property type="entry name" value="AIRS_C"/>
    <property type="match status" value="2"/>
</dbReference>
<dbReference type="Pfam" id="PF18072">
    <property type="entry name" value="FGAR-AT_linker"/>
    <property type="match status" value="1"/>
</dbReference>
<dbReference type="PIRSF" id="PIRSF001587">
    <property type="entry name" value="FGAM_synthase_II"/>
    <property type="match status" value="1"/>
</dbReference>
<dbReference type="SUPFAM" id="SSF56042">
    <property type="entry name" value="PurM C-terminal domain-like"/>
    <property type="match status" value="2"/>
</dbReference>
<dbReference type="SUPFAM" id="SSF55326">
    <property type="entry name" value="PurM N-terminal domain-like"/>
    <property type="match status" value="2"/>
</dbReference>
<keyword id="KW-0067">ATP-binding</keyword>
<keyword id="KW-0963">Cytoplasm</keyword>
<keyword id="KW-0436">Ligase</keyword>
<keyword id="KW-0460">Magnesium</keyword>
<keyword id="KW-0479">Metal-binding</keyword>
<keyword id="KW-0547">Nucleotide-binding</keyword>
<keyword id="KW-0658">Purine biosynthesis</keyword>
<comment type="function">
    <text evidence="1">Part of the phosphoribosylformylglycinamidine synthase complex involved in the purines biosynthetic pathway. Catalyzes the ATP-dependent conversion of formylglycinamide ribonucleotide (FGAR) and glutamine to yield formylglycinamidine ribonucleotide (FGAM) and glutamate. The FGAM synthase complex is composed of three subunits. PurQ produces an ammonia molecule by converting glutamine to glutamate. PurL transfers the ammonia molecule to FGAR to form FGAM in an ATP-dependent manner. PurS interacts with PurQ and PurL and is thought to assist in the transfer of the ammonia molecule from PurQ to PurL.</text>
</comment>
<comment type="catalytic activity">
    <reaction evidence="1">
        <text>N(2)-formyl-N(1)-(5-phospho-beta-D-ribosyl)glycinamide + L-glutamine + ATP + H2O = 2-formamido-N(1)-(5-O-phospho-beta-D-ribosyl)acetamidine + L-glutamate + ADP + phosphate + H(+)</text>
        <dbReference type="Rhea" id="RHEA:17129"/>
        <dbReference type="ChEBI" id="CHEBI:15377"/>
        <dbReference type="ChEBI" id="CHEBI:15378"/>
        <dbReference type="ChEBI" id="CHEBI:29985"/>
        <dbReference type="ChEBI" id="CHEBI:30616"/>
        <dbReference type="ChEBI" id="CHEBI:43474"/>
        <dbReference type="ChEBI" id="CHEBI:58359"/>
        <dbReference type="ChEBI" id="CHEBI:147286"/>
        <dbReference type="ChEBI" id="CHEBI:147287"/>
        <dbReference type="ChEBI" id="CHEBI:456216"/>
        <dbReference type="EC" id="6.3.5.3"/>
    </reaction>
</comment>
<comment type="pathway">
    <text evidence="1">Purine metabolism; IMP biosynthesis via de novo pathway; 5-amino-1-(5-phospho-D-ribosyl)imidazole from N(2)-formyl-N(1)-(5-phospho-D-ribosyl)glycinamide: step 1/2.</text>
</comment>
<comment type="subunit">
    <text evidence="1">Monomer. Part of the FGAM synthase complex composed of 1 PurL, 1 PurQ and 2 PurS subunits.</text>
</comment>
<comment type="subcellular location">
    <subcellularLocation>
        <location evidence="1">Cytoplasm</location>
    </subcellularLocation>
</comment>
<comment type="similarity">
    <text evidence="1">Belongs to the FGAMS family.</text>
</comment>
<protein>
    <recommendedName>
        <fullName evidence="1">Phosphoribosylformylglycinamidine synthase subunit PurL</fullName>
        <shortName evidence="1">FGAM synthase</shortName>
        <ecNumber evidence="1">6.3.5.3</ecNumber>
    </recommendedName>
    <alternativeName>
        <fullName evidence="1">Formylglycinamide ribonucleotide amidotransferase subunit II</fullName>
        <shortName evidence="1">FGAR amidotransferase II</shortName>
        <shortName evidence="1">FGAR-AT II</shortName>
    </alternativeName>
    <alternativeName>
        <fullName evidence="1">Glutamine amidotransferase PurL</fullName>
    </alternativeName>
    <alternativeName>
        <fullName evidence="1">Phosphoribosylformylglycinamidine synthase subunit II</fullName>
    </alternativeName>
</protein>
<sequence>MTGTPSAPTTSPDDQADGPGEGTVDRQPYRELGLTDDEYERIVATLGRVPTDAELAMYSVMWSEHCSYKSSKVHLRQFRDTPATDRLLVGMGENAGVVDVGEGLAVTFKVESHNHPSFVEPYQGAATGVGGIVRDILTMGARPIGILDPLRFGAADAPDTARVLPGVVAGIGGYGNCLGLPTIGGEVVFDPVYGGNPLVNALCVGVMPVGRVQTSAATGVGNAVVLLGAKTGRDGIGGVSVLASATFDEGGGPARRPSVQVGDPFTEKILIECCLELFDRGLVTGIQDLGGAGLTCALTETTAAGIATGQPGGMEVDLDLVPLREASMAAHEVLASESQERMLAIVTPDALPEVLALAERWGVIATNIGTVTDSGRLVVRWHGEVVVDVPPGSLADDGPVYERPLRRPADLDLLRADAPSALERPRTGDALRATLLRMIASPNLCSRAWVTEQYDRYVQANTVLAQPEDAGVLRLSASGLGIALATDGNGRYARLDPFAGAQLALAEACRNVTAAGAEPIAVTNCLNFGSPEDPEVMWQFAQACAGLADACRRLGLPVTGGNVSFYNQTGSAPIHPTPVVGVLGLFDDVTRRTPIGFTDEGDALLLLGDTRDEFGGSEWAWATHGHLGGTPPAVDLEREKLLGEILVGGSREGLLTAAHDLSEGGLAQALVESCLRGGHGARIELPAGADAFVELFSESAGRAVVAVPAAEQDRFARLCADRGLPCRQIGVVTDGEGGSLNVAGEFAIPLDELRAAHEGTLPRLFGRGA</sequence>
<gene>
    <name evidence="1" type="primary">purL</name>
    <name type="ordered locus">Franean1_0155</name>
</gene>
<accession>A8LCI3</accession>
<evidence type="ECO:0000255" key="1">
    <source>
        <dbReference type="HAMAP-Rule" id="MF_00420"/>
    </source>
</evidence>
<evidence type="ECO:0000256" key="2">
    <source>
        <dbReference type="SAM" id="MobiDB-lite"/>
    </source>
</evidence>
<feature type="chain" id="PRO_1000194825" description="Phosphoribosylformylglycinamidine synthase subunit PurL">
    <location>
        <begin position="1"/>
        <end position="769"/>
    </location>
</feature>
<feature type="region of interest" description="Disordered" evidence="2">
    <location>
        <begin position="1"/>
        <end position="30"/>
    </location>
</feature>
<feature type="compositionally biased region" description="Polar residues" evidence="2">
    <location>
        <begin position="1"/>
        <end position="13"/>
    </location>
</feature>
<feature type="active site" evidence="1">
    <location>
        <position position="65"/>
    </location>
</feature>
<feature type="active site" description="Proton acceptor" evidence="1">
    <location>
        <position position="113"/>
    </location>
</feature>
<feature type="binding site" evidence="1">
    <location>
        <position position="68"/>
    </location>
    <ligand>
        <name>ATP</name>
        <dbReference type="ChEBI" id="CHEBI:30616"/>
    </ligand>
</feature>
<feature type="binding site" evidence="1">
    <location>
        <position position="109"/>
    </location>
    <ligand>
        <name>ATP</name>
        <dbReference type="ChEBI" id="CHEBI:30616"/>
    </ligand>
</feature>
<feature type="binding site" evidence="1">
    <location>
        <position position="111"/>
    </location>
    <ligand>
        <name>Mg(2+)</name>
        <dbReference type="ChEBI" id="CHEBI:18420"/>
        <label>1</label>
    </ligand>
</feature>
<feature type="binding site" evidence="1">
    <location>
        <begin position="112"/>
        <end position="115"/>
    </location>
    <ligand>
        <name>substrate</name>
    </ligand>
</feature>
<feature type="binding site" evidence="1">
    <location>
        <position position="134"/>
    </location>
    <ligand>
        <name>substrate</name>
    </ligand>
</feature>
<feature type="binding site" evidence="1">
    <location>
        <position position="135"/>
    </location>
    <ligand>
        <name>Mg(2+)</name>
        <dbReference type="ChEBI" id="CHEBI:18420"/>
        <label>2</label>
    </ligand>
</feature>
<feature type="binding site" evidence="1">
    <location>
        <position position="260"/>
    </location>
    <ligand>
        <name>substrate</name>
    </ligand>
</feature>
<feature type="binding site" evidence="1">
    <location>
        <position position="288"/>
    </location>
    <ligand>
        <name>Mg(2+)</name>
        <dbReference type="ChEBI" id="CHEBI:18420"/>
        <label>2</label>
    </ligand>
</feature>
<feature type="binding site" evidence="1">
    <location>
        <begin position="337"/>
        <end position="339"/>
    </location>
    <ligand>
        <name>substrate</name>
    </ligand>
</feature>
<feature type="binding site" evidence="1">
    <location>
        <position position="524"/>
    </location>
    <ligand>
        <name>ATP</name>
        <dbReference type="ChEBI" id="CHEBI:30616"/>
    </ligand>
</feature>
<feature type="binding site" evidence="1">
    <location>
        <position position="561"/>
    </location>
    <ligand>
        <name>ATP</name>
        <dbReference type="ChEBI" id="CHEBI:30616"/>
    </ligand>
</feature>
<feature type="binding site" evidence="1">
    <location>
        <position position="562"/>
    </location>
    <ligand>
        <name>Mg(2+)</name>
        <dbReference type="ChEBI" id="CHEBI:18420"/>
        <label>1</label>
    </ligand>
</feature>
<feature type="binding site" evidence="1">
    <location>
        <position position="564"/>
    </location>
    <ligand>
        <name>substrate</name>
    </ligand>
</feature>
<proteinExistence type="inferred from homology"/>
<reference key="1">
    <citation type="journal article" date="2007" name="Genome Res.">
        <title>Genome characteristics of facultatively symbiotic Frankia sp. strains reflect host range and host plant biogeography.</title>
        <authorList>
            <person name="Normand P."/>
            <person name="Lapierre P."/>
            <person name="Tisa L.S."/>
            <person name="Gogarten J.P."/>
            <person name="Alloisio N."/>
            <person name="Bagnarol E."/>
            <person name="Bassi C.A."/>
            <person name="Berry A.M."/>
            <person name="Bickhart D.M."/>
            <person name="Choisne N."/>
            <person name="Couloux A."/>
            <person name="Cournoyer B."/>
            <person name="Cruveiller S."/>
            <person name="Daubin V."/>
            <person name="Demange N."/>
            <person name="Francino M.P."/>
            <person name="Goltsman E."/>
            <person name="Huang Y."/>
            <person name="Kopp O.R."/>
            <person name="Labarre L."/>
            <person name="Lapidus A."/>
            <person name="Lavire C."/>
            <person name="Marechal J."/>
            <person name="Martinez M."/>
            <person name="Mastronunzio J.E."/>
            <person name="Mullin B.C."/>
            <person name="Niemann J."/>
            <person name="Pujic P."/>
            <person name="Rawnsley T."/>
            <person name="Rouy Z."/>
            <person name="Schenowitz C."/>
            <person name="Sellstedt A."/>
            <person name="Tavares F."/>
            <person name="Tomkins J.P."/>
            <person name="Vallenet D."/>
            <person name="Valverde C."/>
            <person name="Wall L.G."/>
            <person name="Wang Y."/>
            <person name="Medigue C."/>
            <person name="Benson D.R."/>
        </authorList>
    </citation>
    <scope>NUCLEOTIDE SEQUENCE [LARGE SCALE GENOMIC DNA]</scope>
    <source>
        <strain>EAN1pec</strain>
    </source>
</reference>